<accession>Q06RE9</accession>
<reference key="1">
    <citation type="journal article" date="2007" name="Mol. Biol. Evol.">
        <title>Gene relocations within chloroplast genomes of Jasminum and Menodora (Oleaceae) are due to multiple, overlapping inversions.</title>
        <authorList>
            <person name="Lee H.-L."/>
            <person name="Jansen R.K."/>
            <person name="Chumley T.W."/>
            <person name="Kim K.-J."/>
        </authorList>
    </citation>
    <scope>NUCLEOTIDE SEQUENCE [LARGE SCALE GENOMIC DNA]</scope>
</reference>
<organism>
    <name type="scientific">Jasminum nudiflorum</name>
    <name type="common">Winter jasmine</name>
    <dbReference type="NCBI Taxonomy" id="126431"/>
    <lineage>
        <taxon>Eukaryota</taxon>
        <taxon>Viridiplantae</taxon>
        <taxon>Streptophyta</taxon>
        <taxon>Embryophyta</taxon>
        <taxon>Tracheophyta</taxon>
        <taxon>Spermatophyta</taxon>
        <taxon>Magnoliopsida</taxon>
        <taxon>eudicotyledons</taxon>
        <taxon>Gunneridae</taxon>
        <taxon>Pentapetalae</taxon>
        <taxon>asterids</taxon>
        <taxon>lamiids</taxon>
        <taxon>Lamiales</taxon>
        <taxon>Oleaceae</taxon>
        <taxon>Jasmineae</taxon>
        <taxon>Jasminum</taxon>
    </lineage>
</organism>
<sequence length="88" mass="10200">MIKLRLKRCGRKQRAVYQIVAIDVRSPREGKALRKVGFYDPIKNQTDLNVRAILYFLEKGAQPTGTVQDILKKAEIDKELRPNQTKFN</sequence>
<geneLocation type="chloroplast"/>
<keyword id="KW-0150">Chloroplast</keyword>
<keyword id="KW-0934">Plastid</keyword>
<keyword id="KW-0687">Ribonucleoprotein</keyword>
<keyword id="KW-0689">Ribosomal protein</keyword>
<evidence type="ECO:0000255" key="1">
    <source>
        <dbReference type="HAMAP-Rule" id="MF_00385"/>
    </source>
</evidence>
<evidence type="ECO:0000305" key="2"/>
<protein>
    <recommendedName>
        <fullName evidence="1">Small ribosomal subunit protein bS16c</fullName>
    </recommendedName>
    <alternativeName>
        <fullName evidence="2">30S ribosomal protein S16, chloroplastic</fullName>
    </alternativeName>
</protein>
<comment type="subcellular location">
    <subcellularLocation>
        <location>Plastid</location>
        <location>Chloroplast</location>
    </subcellularLocation>
</comment>
<comment type="similarity">
    <text evidence="1">Belongs to the bacterial ribosomal protein bS16 family.</text>
</comment>
<dbReference type="EMBL" id="DQ673255">
    <property type="protein sequence ID" value="ABG74610.1"/>
    <property type="molecule type" value="Genomic_DNA"/>
</dbReference>
<dbReference type="RefSeq" id="YP_778472.1">
    <property type="nucleotide sequence ID" value="NC_008407.1"/>
</dbReference>
<dbReference type="SMR" id="Q06RE9"/>
<dbReference type="GeneID" id="4319777"/>
<dbReference type="GO" id="GO:0009507">
    <property type="term" value="C:chloroplast"/>
    <property type="evidence" value="ECO:0007669"/>
    <property type="project" value="UniProtKB-SubCell"/>
</dbReference>
<dbReference type="GO" id="GO:0005739">
    <property type="term" value="C:mitochondrion"/>
    <property type="evidence" value="ECO:0007669"/>
    <property type="project" value="GOC"/>
</dbReference>
<dbReference type="GO" id="GO:0015935">
    <property type="term" value="C:small ribosomal subunit"/>
    <property type="evidence" value="ECO:0007669"/>
    <property type="project" value="TreeGrafter"/>
</dbReference>
<dbReference type="GO" id="GO:0003735">
    <property type="term" value="F:structural constituent of ribosome"/>
    <property type="evidence" value="ECO:0007669"/>
    <property type="project" value="InterPro"/>
</dbReference>
<dbReference type="GO" id="GO:0032543">
    <property type="term" value="P:mitochondrial translation"/>
    <property type="evidence" value="ECO:0007669"/>
    <property type="project" value="TreeGrafter"/>
</dbReference>
<dbReference type="FunFam" id="3.30.1320.10:FF:000003">
    <property type="entry name" value="30S ribosomal protein S16, chloroplastic"/>
    <property type="match status" value="1"/>
</dbReference>
<dbReference type="Gene3D" id="3.30.1320.10">
    <property type="match status" value="1"/>
</dbReference>
<dbReference type="HAMAP" id="MF_00385">
    <property type="entry name" value="Ribosomal_bS16"/>
    <property type="match status" value="1"/>
</dbReference>
<dbReference type="InterPro" id="IPR000307">
    <property type="entry name" value="Ribosomal_bS16"/>
</dbReference>
<dbReference type="InterPro" id="IPR020592">
    <property type="entry name" value="Ribosomal_bS16_CS"/>
</dbReference>
<dbReference type="InterPro" id="IPR023803">
    <property type="entry name" value="Ribosomal_bS16_dom_sf"/>
</dbReference>
<dbReference type="NCBIfam" id="TIGR00002">
    <property type="entry name" value="S16"/>
    <property type="match status" value="1"/>
</dbReference>
<dbReference type="PANTHER" id="PTHR12919">
    <property type="entry name" value="30S RIBOSOMAL PROTEIN S16"/>
    <property type="match status" value="1"/>
</dbReference>
<dbReference type="PANTHER" id="PTHR12919:SF20">
    <property type="entry name" value="SMALL RIBOSOMAL SUBUNIT PROTEIN BS16M"/>
    <property type="match status" value="1"/>
</dbReference>
<dbReference type="Pfam" id="PF00886">
    <property type="entry name" value="Ribosomal_S16"/>
    <property type="match status" value="1"/>
</dbReference>
<dbReference type="SUPFAM" id="SSF54565">
    <property type="entry name" value="Ribosomal protein S16"/>
    <property type="match status" value="1"/>
</dbReference>
<dbReference type="PROSITE" id="PS00732">
    <property type="entry name" value="RIBOSOMAL_S16"/>
    <property type="match status" value="1"/>
</dbReference>
<name>RR16_JASNU</name>
<gene>
    <name evidence="1" type="primary">rps16</name>
    <name type="ORF">JNC0055</name>
</gene>
<proteinExistence type="inferred from homology"/>
<feature type="chain" id="PRO_0000276950" description="Small ribosomal subunit protein bS16c">
    <location>
        <begin position="1"/>
        <end position="88"/>
    </location>
</feature>